<proteinExistence type="evidence at protein level"/>
<sequence length="9" mass="1128">TPSQDFMRF</sequence>
<comment type="function">
    <text>Able to induce fluid secretion from the isolated salivary gland of Calliphora.</text>
</comment>
<comment type="subcellular location">
    <subcellularLocation>
        <location>Secreted</location>
    </subcellularLocation>
</comment>
<comment type="similarity">
    <text evidence="2">Belongs to the FARP (FMRFamide related peptide) family.</text>
</comment>
<reference key="1">
    <citation type="journal article" date="1992" name="Proc. Natl. Acad. Sci. U.S.A.">
        <title>Isolation, structure, and activity of -Phe-Met-Arg-Phe-NH2 neuropeptides (designated calliFMRFamides) from the blowfly Calliphora vomitoria.</title>
        <authorList>
            <person name="Duve H."/>
            <person name="Johnsen A.H."/>
            <person name="Sewell J.C."/>
            <person name="Scott A.G."/>
            <person name="Orchard I."/>
            <person name="Rehfeld J.F."/>
            <person name="Thorpe A."/>
        </authorList>
    </citation>
    <scope>PROTEIN SEQUENCE</scope>
    <scope>AMIDATION AT PHE-9</scope>
    <source>
        <tissue>Thoracic ganglion</tissue>
    </source>
</reference>
<name>FAR2_CALVO</name>
<accession>P41857</accession>
<protein>
    <recommendedName>
        <fullName>CalliFMRFamide-2</fullName>
    </recommendedName>
</protein>
<organism>
    <name type="scientific">Calliphora vomitoria</name>
    <name type="common">Blue bottle fly</name>
    <name type="synonym">Musca vomitoria</name>
    <dbReference type="NCBI Taxonomy" id="27454"/>
    <lineage>
        <taxon>Eukaryota</taxon>
        <taxon>Metazoa</taxon>
        <taxon>Ecdysozoa</taxon>
        <taxon>Arthropoda</taxon>
        <taxon>Hexapoda</taxon>
        <taxon>Insecta</taxon>
        <taxon>Pterygota</taxon>
        <taxon>Neoptera</taxon>
        <taxon>Endopterygota</taxon>
        <taxon>Diptera</taxon>
        <taxon>Brachycera</taxon>
        <taxon>Muscomorpha</taxon>
        <taxon>Oestroidea</taxon>
        <taxon>Calliphoridae</taxon>
        <taxon>Calliphorinae</taxon>
        <taxon>Calliphora</taxon>
    </lineage>
</organism>
<evidence type="ECO:0000269" key="1">
    <source>
    </source>
</evidence>
<evidence type="ECO:0000305" key="2"/>
<feature type="peptide" id="PRO_0000043664" description="CalliFMRFamide-2">
    <location>
        <begin position="1"/>
        <end position="9"/>
    </location>
</feature>
<feature type="modified residue" description="Phenylalanine amide" evidence="1">
    <location>
        <position position="9"/>
    </location>
</feature>
<keyword id="KW-0027">Amidation</keyword>
<keyword id="KW-0903">Direct protein sequencing</keyword>
<keyword id="KW-0527">Neuropeptide</keyword>
<keyword id="KW-0964">Secreted</keyword>
<dbReference type="PIR" id="B41978">
    <property type="entry name" value="B41978"/>
</dbReference>
<dbReference type="GO" id="GO:0005576">
    <property type="term" value="C:extracellular region"/>
    <property type="evidence" value="ECO:0007669"/>
    <property type="project" value="UniProtKB-SubCell"/>
</dbReference>
<dbReference type="GO" id="GO:0007218">
    <property type="term" value="P:neuropeptide signaling pathway"/>
    <property type="evidence" value="ECO:0007669"/>
    <property type="project" value="UniProtKB-KW"/>
</dbReference>